<proteinExistence type="inferred from homology"/>
<name>RS15_PROM9</name>
<protein>
    <recommendedName>
        <fullName evidence="1">Small ribosomal subunit protein uS15</fullName>
    </recommendedName>
    <alternativeName>
        <fullName evidence="2">30S ribosomal protein S15</fullName>
    </alternativeName>
</protein>
<accession>Q31B29</accession>
<sequence>MSLDTAEKQKLIETHQVHATDTGSVEVQVAMLSKRISKLSEHLQGNIHDFASRQGLLKMIGKRKRLLSYIKDKNVQKYQDLVKKIGIRG</sequence>
<feature type="chain" id="PRO_0000255514" description="Small ribosomal subunit protein uS15">
    <location>
        <begin position="1"/>
        <end position="89"/>
    </location>
</feature>
<gene>
    <name evidence="1" type="primary">rpsO</name>
    <name evidence="1" type="synonym">rps15</name>
    <name type="ordered locus">PMT9312_0856</name>
</gene>
<dbReference type="EMBL" id="CP000111">
    <property type="protein sequence ID" value="ABB49916.1"/>
    <property type="molecule type" value="Genomic_DNA"/>
</dbReference>
<dbReference type="RefSeq" id="WP_011376411.1">
    <property type="nucleotide sequence ID" value="NC_007577.1"/>
</dbReference>
<dbReference type="SMR" id="Q31B29"/>
<dbReference type="STRING" id="74546.PMT9312_0856"/>
<dbReference type="KEGG" id="pmi:PMT9312_0856"/>
<dbReference type="eggNOG" id="COG0184">
    <property type="taxonomic scope" value="Bacteria"/>
</dbReference>
<dbReference type="HOGENOM" id="CLU_148518_0_0_3"/>
<dbReference type="OrthoDB" id="9799262at2"/>
<dbReference type="Proteomes" id="UP000002715">
    <property type="component" value="Chromosome"/>
</dbReference>
<dbReference type="GO" id="GO:0022627">
    <property type="term" value="C:cytosolic small ribosomal subunit"/>
    <property type="evidence" value="ECO:0007669"/>
    <property type="project" value="TreeGrafter"/>
</dbReference>
<dbReference type="GO" id="GO:0019843">
    <property type="term" value="F:rRNA binding"/>
    <property type="evidence" value="ECO:0007669"/>
    <property type="project" value="UniProtKB-UniRule"/>
</dbReference>
<dbReference type="GO" id="GO:0003735">
    <property type="term" value="F:structural constituent of ribosome"/>
    <property type="evidence" value="ECO:0007669"/>
    <property type="project" value="InterPro"/>
</dbReference>
<dbReference type="GO" id="GO:0006412">
    <property type="term" value="P:translation"/>
    <property type="evidence" value="ECO:0007669"/>
    <property type="project" value="UniProtKB-UniRule"/>
</dbReference>
<dbReference type="CDD" id="cd00353">
    <property type="entry name" value="Ribosomal_S15p_S13e"/>
    <property type="match status" value="1"/>
</dbReference>
<dbReference type="FunFam" id="1.10.287.10:FF:000002">
    <property type="entry name" value="30S ribosomal protein S15"/>
    <property type="match status" value="1"/>
</dbReference>
<dbReference type="Gene3D" id="6.10.250.3130">
    <property type="match status" value="1"/>
</dbReference>
<dbReference type="Gene3D" id="1.10.287.10">
    <property type="entry name" value="S15/NS1, RNA-binding"/>
    <property type="match status" value="1"/>
</dbReference>
<dbReference type="HAMAP" id="MF_01343_B">
    <property type="entry name" value="Ribosomal_uS15_B"/>
    <property type="match status" value="1"/>
</dbReference>
<dbReference type="InterPro" id="IPR000589">
    <property type="entry name" value="Ribosomal_uS15"/>
</dbReference>
<dbReference type="InterPro" id="IPR005290">
    <property type="entry name" value="Ribosomal_uS15_bac-type"/>
</dbReference>
<dbReference type="InterPro" id="IPR009068">
    <property type="entry name" value="uS15_NS1_RNA-bd_sf"/>
</dbReference>
<dbReference type="NCBIfam" id="TIGR00952">
    <property type="entry name" value="S15_bact"/>
    <property type="match status" value="1"/>
</dbReference>
<dbReference type="PANTHER" id="PTHR23321">
    <property type="entry name" value="RIBOSOMAL PROTEIN S15, BACTERIAL AND ORGANELLAR"/>
    <property type="match status" value="1"/>
</dbReference>
<dbReference type="PANTHER" id="PTHR23321:SF26">
    <property type="entry name" value="SMALL RIBOSOMAL SUBUNIT PROTEIN US15M"/>
    <property type="match status" value="1"/>
</dbReference>
<dbReference type="Pfam" id="PF00312">
    <property type="entry name" value="Ribosomal_S15"/>
    <property type="match status" value="1"/>
</dbReference>
<dbReference type="SMART" id="SM01387">
    <property type="entry name" value="Ribosomal_S15"/>
    <property type="match status" value="1"/>
</dbReference>
<dbReference type="SUPFAM" id="SSF47060">
    <property type="entry name" value="S15/NS1 RNA-binding domain"/>
    <property type="match status" value="1"/>
</dbReference>
<dbReference type="PROSITE" id="PS00362">
    <property type="entry name" value="RIBOSOMAL_S15"/>
    <property type="match status" value="1"/>
</dbReference>
<organism>
    <name type="scientific">Prochlorococcus marinus (strain MIT 9312)</name>
    <dbReference type="NCBI Taxonomy" id="74546"/>
    <lineage>
        <taxon>Bacteria</taxon>
        <taxon>Bacillati</taxon>
        <taxon>Cyanobacteriota</taxon>
        <taxon>Cyanophyceae</taxon>
        <taxon>Synechococcales</taxon>
        <taxon>Prochlorococcaceae</taxon>
        <taxon>Prochlorococcus</taxon>
    </lineage>
</organism>
<evidence type="ECO:0000255" key="1">
    <source>
        <dbReference type="HAMAP-Rule" id="MF_01343"/>
    </source>
</evidence>
<evidence type="ECO:0000305" key="2"/>
<comment type="function">
    <text evidence="1">One of the primary rRNA binding proteins, it binds directly to 16S rRNA where it helps nucleate assembly of the platform of the 30S subunit by binding and bridging several RNA helices of the 16S rRNA.</text>
</comment>
<comment type="function">
    <text evidence="1">Forms an intersubunit bridge (bridge B4) with the 23S rRNA of the 50S subunit in the ribosome.</text>
</comment>
<comment type="subunit">
    <text evidence="1">Part of the 30S ribosomal subunit. Forms a bridge to the 50S subunit in the 70S ribosome, contacting the 23S rRNA.</text>
</comment>
<comment type="similarity">
    <text evidence="1">Belongs to the universal ribosomal protein uS15 family.</text>
</comment>
<keyword id="KW-0687">Ribonucleoprotein</keyword>
<keyword id="KW-0689">Ribosomal protein</keyword>
<keyword id="KW-0694">RNA-binding</keyword>
<keyword id="KW-0699">rRNA-binding</keyword>
<reference key="1">
    <citation type="journal article" date="2006" name="Science">
        <title>Genomic islands and the ecology and evolution of Prochlorococcus.</title>
        <authorList>
            <person name="Coleman M.L."/>
            <person name="Sullivan M.B."/>
            <person name="Martiny A.C."/>
            <person name="Steglich C."/>
            <person name="Barry K."/>
            <person name="Delong E.F."/>
            <person name="Chisholm S.W."/>
        </authorList>
    </citation>
    <scope>NUCLEOTIDE SEQUENCE [LARGE SCALE GENOMIC DNA]</scope>
    <source>
        <strain>MIT 9312</strain>
    </source>
</reference>